<evidence type="ECO:0000250" key="1"/>
<evidence type="ECO:0000250" key="2">
    <source>
        <dbReference type="UniProtKB" id="P11177"/>
    </source>
</evidence>
<evidence type="ECO:0000255" key="3"/>
<gene>
    <name type="ordered locus">Os09g0509200</name>
    <name type="ordered locus">LOC_Os09g33500</name>
    <name type="ORF">OsJ_29962</name>
</gene>
<name>ODPB2_ORYSJ</name>
<accession>Q0J0H4</accession>
<accession>A0A0P0XPJ5</accession>
<feature type="transit peptide" description="Mitochondrion" evidence="3">
    <location>
        <begin position="1"/>
        <end position="36"/>
    </location>
</feature>
<feature type="chain" id="PRO_0000421374" description="Pyruvate dehydrogenase E1 component subunit beta-2, mitochondrial">
    <location>
        <begin position="37"/>
        <end position="376"/>
    </location>
</feature>
<feature type="binding site" evidence="2">
    <location>
        <position position="99"/>
    </location>
    <ligand>
        <name>thiamine diphosphate</name>
        <dbReference type="ChEBI" id="CHEBI:58937"/>
        <note>ligand shared with alpha subunit</note>
    </ligand>
</feature>
<feature type="binding site" evidence="2">
    <location>
        <position position="152"/>
    </location>
    <ligand>
        <name>K(+)</name>
        <dbReference type="ChEBI" id="CHEBI:29103"/>
        <note>structural</note>
    </ligand>
</feature>
<feature type="binding site" evidence="2">
    <location>
        <position position="200"/>
    </location>
    <ligand>
        <name>K(+)</name>
        <dbReference type="ChEBI" id="CHEBI:29103"/>
        <note>structural</note>
    </ligand>
</feature>
<feature type="binding site" evidence="2">
    <location>
        <position position="201"/>
    </location>
    <ligand>
        <name>K(+)</name>
        <dbReference type="ChEBI" id="CHEBI:29103"/>
        <note>structural</note>
    </ligand>
</feature>
<feature type="binding site" evidence="2">
    <location>
        <position position="203"/>
    </location>
    <ligand>
        <name>K(+)</name>
        <dbReference type="ChEBI" id="CHEBI:29103"/>
        <note>structural</note>
    </ligand>
</feature>
<organism>
    <name type="scientific">Oryza sativa subsp. japonica</name>
    <name type="common">Rice</name>
    <dbReference type="NCBI Taxonomy" id="39947"/>
    <lineage>
        <taxon>Eukaryota</taxon>
        <taxon>Viridiplantae</taxon>
        <taxon>Streptophyta</taxon>
        <taxon>Embryophyta</taxon>
        <taxon>Tracheophyta</taxon>
        <taxon>Spermatophyta</taxon>
        <taxon>Magnoliopsida</taxon>
        <taxon>Liliopsida</taxon>
        <taxon>Poales</taxon>
        <taxon>Poaceae</taxon>
        <taxon>BOP clade</taxon>
        <taxon>Oryzoideae</taxon>
        <taxon>Oryzeae</taxon>
        <taxon>Oryzinae</taxon>
        <taxon>Oryza</taxon>
        <taxon>Oryza sativa</taxon>
    </lineage>
</organism>
<keyword id="KW-0479">Metal-binding</keyword>
<keyword id="KW-0496">Mitochondrion</keyword>
<keyword id="KW-0560">Oxidoreductase</keyword>
<keyword id="KW-0630">Potassium</keyword>
<keyword id="KW-0670">Pyruvate</keyword>
<keyword id="KW-1185">Reference proteome</keyword>
<keyword id="KW-0786">Thiamine pyrophosphate</keyword>
<keyword id="KW-0809">Transit peptide</keyword>
<dbReference type="EC" id="1.2.4.1"/>
<dbReference type="EMBL" id="AP008215">
    <property type="protein sequence ID" value="BAF25541.1"/>
    <property type="molecule type" value="Genomic_DNA"/>
</dbReference>
<dbReference type="EMBL" id="AP014965">
    <property type="protein sequence ID" value="BAT08892.1"/>
    <property type="molecule type" value="Genomic_DNA"/>
</dbReference>
<dbReference type="EMBL" id="CM000146">
    <property type="protein sequence ID" value="EEE70023.1"/>
    <property type="molecule type" value="Genomic_DNA"/>
</dbReference>
<dbReference type="EMBL" id="AK069525">
    <property type="protein sequence ID" value="BAG91472.1"/>
    <property type="molecule type" value="mRNA"/>
</dbReference>
<dbReference type="RefSeq" id="XP_015612322.1">
    <property type="nucleotide sequence ID" value="XM_015756836.1"/>
</dbReference>
<dbReference type="SMR" id="Q0J0H4"/>
<dbReference type="FunCoup" id="Q0J0H4">
    <property type="interactions" value="2869"/>
</dbReference>
<dbReference type="STRING" id="39947.Q0J0H4"/>
<dbReference type="PaxDb" id="39947-Q0J0H4"/>
<dbReference type="EnsemblPlants" id="Os09t0509200-01">
    <property type="protein sequence ID" value="Os09t0509200-01"/>
    <property type="gene ID" value="Os09g0509200"/>
</dbReference>
<dbReference type="Gramene" id="Os09t0509200-01">
    <property type="protein sequence ID" value="Os09t0509200-01"/>
    <property type="gene ID" value="Os09g0509200"/>
</dbReference>
<dbReference type="KEGG" id="dosa:Os09g0509200"/>
<dbReference type="eggNOG" id="KOG0524">
    <property type="taxonomic scope" value="Eukaryota"/>
</dbReference>
<dbReference type="InParanoid" id="Q0J0H4"/>
<dbReference type="OMA" id="LPLDTCF"/>
<dbReference type="OrthoDB" id="10266385at2759"/>
<dbReference type="Proteomes" id="UP000000763">
    <property type="component" value="Chromosome 9"/>
</dbReference>
<dbReference type="Proteomes" id="UP000007752">
    <property type="component" value="Chromosome 9"/>
</dbReference>
<dbReference type="Proteomes" id="UP000059680">
    <property type="component" value="Chromosome 9"/>
</dbReference>
<dbReference type="ExpressionAtlas" id="Q0J0H4">
    <property type="expression patterns" value="baseline and differential"/>
</dbReference>
<dbReference type="GO" id="GO:0005759">
    <property type="term" value="C:mitochondrial matrix"/>
    <property type="evidence" value="ECO:0007669"/>
    <property type="project" value="UniProtKB-SubCell"/>
</dbReference>
<dbReference type="GO" id="GO:0045254">
    <property type="term" value="C:pyruvate dehydrogenase complex"/>
    <property type="evidence" value="ECO:0000318"/>
    <property type="project" value="GO_Central"/>
</dbReference>
<dbReference type="GO" id="GO:0046872">
    <property type="term" value="F:metal ion binding"/>
    <property type="evidence" value="ECO:0007669"/>
    <property type="project" value="UniProtKB-KW"/>
</dbReference>
<dbReference type="GO" id="GO:0004739">
    <property type="term" value="F:pyruvate dehydrogenase (acetyl-transferring) activity"/>
    <property type="evidence" value="ECO:0000318"/>
    <property type="project" value="GO_Central"/>
</dbReference>
<dbReference type="GO" id="GO:0006086">
    <property type="term" value="P:pyruvate decarboxylation to acetyl-CoA"/>
    <property type="evidence" value="ECO:0000318"/>
    <property type="project" value="GO_Central"/>
</dbReference>
<dbReference type="CDD" id="cd07036">
    <property type="entry name" value="TPP_PYR_E1-PDHc-beta_like"/>
    <property type="match status" value="1"/>
</dbReference>
<dbReference type="FunFam" id="3.40.50.920:FF:000001">
    <property type="entry name" value="Pyruvate dehydrogenase E1 beta subunit"/>
    <property type="match status" value="1"/>
</dbReference>
<dbReference type="FunFam" id="3.40.50.970:FF:000006">
    <property type="entry name" value="Pyruvate dehydrogenase E1 component subunit beta"/>
    <property type="match status" value="1"/>
</dbReference>
<dbReference type="Gene3D" id="3.40.50.920">
    <property type="match status" value="1"/>
</dbReference>
<dbReference type="Gene3D" id="3.40.50.970">
    <property type="match status" value="1"/>
</dbReference>
<dbReference type="InterPro" id="IPR027110">
    <property type="entry name" value="PDHB_mito-type"/>
</dbReference>
<dbReference type="InterPro" id="IPR029061">
    <property type="entry name" value="THDP-binding"/>
</dbReference>
<dbReference type="InterPro" id="IPR009014">
    <property type="entry name" value="Transketo_C/PFOR_II"/>
</dbReference>
<dbReference type="InterPro" id="IPR005475">
    <property type="entry name" value="Transketolase-like_Pyr-bd"/>
</dbReference>
<dbReference type="InterPro" id="IPR033248">
    <property type="entry name" value="Transketolase_C"/>
</dbReference>
<dbReference type="NCBIfam" id="NF006667">
    <property type="entry name" value="PRK09212.1"/>
    <property type="match status" value="1"/>
</dbReference>
<dbReference type="NCBIfam" id="NF008854">
    <property type="entry name" value="PRK11892.1"/>
    <property type="match status" value="1"/>
</dbReference>
<dbReference type="PANTHER" id="PTHR11624">
    <property type="entry name" value="DEHYDROGENASE RELATED"/>
    <property type="match status" value="1"/>
</dbReference>
<dbReference type="PANTHER" id="PTHR11624:SF96">
    <property type="entry name" value="PYRUVATE DEHYDROGENASE E1 COMPONENT SUBUNIT BETA, MITOCHONDRIAL"/>
    <property type="match status" value="1"/>
</dbReference>
<dbReference type="Pfam" id="PF02779">
    <property type="entry name" value="Transket_pyr"/>
    <property type="match status" value="1"/>
</dbReference>
<dbReference type="Pfam" id="PF02780">
    <property type="entry name" value="Transketolase_C"/>
    <property type="match status" value="1"/>
</dbReference>
<dbReference type="SMART" id="SM00861">
    <property type="entry name" value="Transket_pyr"/>
    <property type="match status" value="1"/>
</dbReference>
<dbReference type="SUPFAM" id="SSF52518">
    <property type="entry name" value="Thiamin diphosphate-binding fold (THDP-binding)"/>
    <property type="match status" value="1"/>
</dbReference>
<dbReference type="SUPFAM" id="SSF52922">
    <property type="entry name" value="TK C-terminal domain-like"/>
    <property type="match status" value="1"/>
</dbReference>
<protein>
    <recommendedName>
        <fullName>Pyruvate dehydrogenase E1 component subunit beta-2, mitochondrial</fullName>
        <shortName>PDHE1-B</shortName>
        <ecNumber>1.2.4.1</ecNumber>
    </recommendedName>
</protein>
<reference key="1">
    <citation type="journal article" date="2005" name="Nature">
        <title>The map-based sequence of the rice genome.</title>
        <authorList>
            <consortium name="International rice genome sequencing project (IRGSP)"/>
        </authorList>
    </citation>
    <scope>NUCLEOTIDE SEQUENCE [LARGE SCALE GENOMIC DNA]</scope>
    <source>
        <strain>cv. Nipponbare</strain>
    </source>
</reference>
<reference key="2">
    <citation type="journal article" date="2008" name="Nucleic Acids Res.">
        <title>The rice annotation project database (RAP-DB): 2008 update.</title>
        <authorList>
            <consortium name="The rice annotation project (RAP)"/>
        </authorList>
    </citation>
    <scope>GENOME REANNOTATION</scope>
    <source>
        <strain>cv. Nipponbare</strain>
    </source>
</reference>
<reference key="3">
    <citation type="journal article" date="2013" name="Rice">
        <title>Improvement of the Oryza sativa Nipponbare reference genome using next generation sequence and optical map data.</title>
        <authorList>
            <person name="Kawahara Y."/>
            <person name="de la Bastide M."/>
            <person name="Hamilton J.P."/>
            <person name="Kanamori H."/>
            <person name="McCombie W.R."/>
            <person name="Ouyang S."/>
            <person name="Schwartz D.C."/>
            <person name="Tanaka T."/>
            <person name="Wu J."/>
            <person name="Zhou S."/>
            <person name="Childs K.L."/>
            <person name="Davidson R.M."/>
            <person name="Lin H."/>
            <person name="Quesada-Ocampo L."/>
            <person name="Vaillancourt B."/>
            <person name="Sakai H."/>
            <person name="Lee S.S."/>
            <person name="Kim J."/>
            <person name="Numa H."/>
            <person name="Itoh T."/>
            <person name="Buell C.R."/>
            <person name="Matsumoto T."/>
        </authorList>
    </citation>
    <scope>GENOME REANNOTATION</scope>
    <source>
        <strain>cv. Nipponbare</strain>
    </source>
</reference>
<reference key="4">
    <citation type="journal article" date="2005" name="PLoS Biol.">
        <title>The genomes of Oryza sativa: a history of duplications.</title>
        <authorList>
            <person name="Yu J."/>
            <person name="Wang J."/>
            <person name="Lin W."/>
            <person name="Li S."/>
            <person name="Li H."/>
            <person name="Zhou J."/>
            <person name="Ni P."/>
            <person name="Dong W."/>
            <person name="Hu S."/>
            <person name="Zeng C."/>
            <person name="Zhang J."/>
            <person name="Zhang Y."/>
            <person name="Li R."/>
            <person name="Xu Z."/>
            <person name="Li S."/>
            <person name="Li X."/>
            <person name="Zheng H."/>
            <person name="Cong L."/>
            <person name="Lin L."/>
            <person name="Yin J."/>
            <person name="Geng J."/>
            <person name="Li G."/>
            <person name="Shi J."/>
            <person name="Liu J."/>
            <person name="Lv H."/>
            <person name="Li J."/>
            <person name="Wang J."/>
            <person name="Deng Y."/>
            <person name="Ran L."/>
            <person name="Shi X."/>
            <person name="Wang X."/>
            <person name="Wu Q."/>
            <person name="Li C."/>
            <person name="Ren X."/>
            <person name="Wang J."/>
            <person name="Wang X."/>
            <person name="Li D."/>
            <person name="Liu D."/>
            <person name="Zhang X."/>
            <person name="Ji Z."/>
            <person name="Zhao W."/>
            <person name="Sun Y."/>
            <person name="Zhang Z."/>
            <person name="Bao J."/>
            <person name="Han Y."/>
            <person name="Dong L."/>
            <person name="Ji J."/>
            <person name="Chen P."/>
            <person name="Wu S."/>
            <person name="Liu J."/>
            <person name="Xiao Y."/>
            <person name="Bu D."/>
            <person name="Tan J."/>
            <person name="Yang L."/>
            <person name="Ye C."/>
            <person name="Zhang J."/>
            <person name="Xu J."/>
            <person name="Zhou Y."/>
            <person name="Yu Y."/>
            <person name="Zhang B."/>
            <person name="Zhuang S."/>
            <person name="Wei H."/>
            <person name="Liu B."/>
            <person name="Lei M."/>
            <person name="Yu H."/>
            <person name="Li Y."/>
            <person name="Xu H."/>
            <person name="Wei S."/>
            <person name="He X."/>
            <person name="Fang L."/>
            <person name="Zhang Z."/>
            <person name="Zhang Y."/>
            <person name="Huang X."/>
            <person name="Su Z."/>
            <person name="Tong W."/>
            <person name="Li J."/>
            <person name="Tong Z."/>
            <person name="Li S."/>
            <person name="Ye J."/>
            <person name="Wang L."/>
            <person name="Fang L."/>
            <person name="Lei T."/>
            <person name="Chen C.-S."/>
            <person name="Chen H.-C."/>
            <person name="Xu Z."/>
            <person name="Li H."/>
            <person name="Huang H."/>
            <person name="Zhang F."/>
            <person name="Xu H."/>
            <person name="Li N."/>
            <person name="Zhao C."/>
            <person name="Li S."/>
            <person name="Dong L."/>
            <person name="Huang Y."/>
            <person name="Li L."/>
            <person name="Xi Y."/>
            <person name="Qi Q."/>
            <person name="Li W."/>
            <person name="Zhang B."/>
            <person name="Hu W."/>
            <person name="Zhang Y."/>
            <person name="Tian X."/>
            <person name="Jiao Y."/>
            <person name="Liang X."/>
            <person name="Jin J."/>
            <person name="Gao L."/>
            <person name="Zheng W."/>
            <person name="Hao B."/>
            <person name="Liu S.-M."/>
            <person name="Wang W."/>
            <person name="Yuan L."/>
            <person name="Cao M."/>
            <person name="McDermott J."/>
            <person name="Samudrala R."/>
            <person name="Wang J."/>
            <person name="Wong G.K.-S."/>
            <person name="Yang H."/>
        </authorList>
    </citation>
    <scope>NUCLEOTIDE SEQUENCE [LARGE SCALE GENOMIC DNA]</scope>
    <source>
        <strain>cv. Nipponbare</strain>
    </source>
</reference>
<reference key="5">
    <citation type="journal article" date="2003" name="Science">
        <title>Collection, mapping, and annotation of over 28,000 cDNA clones from japonica rice.</title>
        <authorList>
            <consortium name="The rice full-length cDNA consortium"/>
        </authorList>
    </citation>
    <scope>NUCLEOTIDE SEQUENCE [LARGE SCALE MRNA]</scope>
    <source>
        <strain>cv. Nipponbare</strain>
    </source>
</reference>
<comment type="function">
    <text evidence="1">The pyruvate dehydrogenase complex catalyzes the overall conversion of pyruvate to acetyl-CoA and CO(2). It contains multiple copies of three enzymatic components: pyruvate dehydrogenase (E1), dihydrolipoamide acetyltransferase (E2) and lipoamide dehydrogenase (E3) (By similarity).</text>
</comment>
<comment type="catalytic activity">
    <reaction>
        <text>N(6)-[(R)-lipoyl]-L-lysyl-[protein] + pyruvate + H(+) = N(6)-[(R)-S(8)-acetyldihydrolipoyl]-L-lysyl-[protein] + CO2</text>
        <dbReference type="Rhea" id="RHEA:19189"/>
        <dbReference type="Rhea" id="RHEA-COMP:10474"/>
        <dbReference type="Rhea" id="RHEA-COMP:10478"/>
        <dbReference type="ChEBI" id="CHEBI:15361"/>
        <dbReference type="ChEBI" id="CHEBI:15378"/>
        <dbReference type="ChEBI" id="CHEBI:16526"/>
        <dbReference type="ChEBI" id="CHEBI:83099"/>
        <dbReference type="ChEBI" id="CHEBI:83111"/>
        <dbReference type="EC" id="1.2.4.1"/>
    </reaction>
</comment>
<comment type="cofactor">
    <cofactor evidence="2">
        <name>thiamine diphosphate</name>
        <dbReference type="ChEBI" id="CHEBI:58937"/>
    </cofactor>
</comment>
<comment type="subunit">
    <text evidence="1">Tetramer of 2 alpha and 2 beta subunits.</text>
</comment>
<comment type="subcellular location">
    <subcellularLocation>
        <location evidence="1">Mitochondrion matrix</location>
    </subcellularLocation>
</comment>
<proteinExistence type="evidence at transcript level"/>
<sequence length="376" mass="40251">MLGAARRQLGSGPMLGQVLRRLRPATAAAADAARAYSAAAKEMTVREALNSALDEEMSADPSVFLMGEEVGEYQGAYKISKGLLDKYGPERVLDTPITEAGFTGIAVGAAYQGLRPVVEFMTFNFSMQAIDHIINSAAKSNYMSAGQISVPIVFRGPNGAAAGVGAQHSQCYAAWYAHVPGLKVLVPYSAEDARGLLKAAIRDPDPVVFLENELLYGESFPISAEVLDSSFALPIGKAKIEREGKDVTITAYSKMVGYALQAADILSKEGISAEVINLRSIRPLDRATINASVRKTNRLVTIEESFPQHGIGAEICMSVVEESFEYLDAPVERIAGADVPMPYAANLERMAVPQVDDIVRAAKRACYRAVPMAATA</sequence>